<protein>
    <recommendedName>
        <fullName evidence="1">Non-structural protein 5</fullName>
        <shortName evidence="1">NSP5</shortName>
    </recommendedName>
    <alternativeName>
        <fullName evidence="1">NS26</fullName>
    </alternativeName>
</protein>
<organismHost>
    <name type="scientific">Bos taurus</name>
    <name type="common">Bovine</name>
    <dbReference type="NCBI Taxonomy" id="9913"/>
</organismHost>
<keyword id="KW-0325">Glycoprotein</keyword>
<keyword id="KW-1035">Host cytoplasm</keyword>
<keyword id="KW-0460">Magnesium</keyword>
<keyword id="KW-0479">Metal-binding</keyword>
<keyword id="KW-0547">Nucleotide-binding</keyword>
<keyword id="KW-0597">Phosphoprotein</keyword>
<keyword id="KW-0694">RNA-binding</keyword>
<dbReference type="EMBL" id="EF990702">
    <property type="protein sequence ID" value="ABV57761.1"/>
    <property type="molecule type" value="Genomic_RNA"/>
</dbReference>
<dbReference type="SMR" id="B2BRG5"/>
<dbReference type="Proteomes" id="UP000007181">
    <property type="component" value="Genome"/>
</dbReference>
<dbReference type="GO" id="GO:0030430">
    <property type="term" value="C:host cell cytoplasm"/>
    <property type="evidence" value="ECO:0007669"/>
    <property type="project" value="UniProtKB-SubCell"/>
</dbReference>
<dbReference type="GO" id="GO:0016887">
    <property type="term" value="F:ATP hydrolysis activity"/>
    <property type="evidence" value="ECO:0007669"/>
    <property type="project" value="UniProtKB-UniRule"/>
</dbReference>
<dbReference type="GO" id="GO:0000287">
    <property type="term" value="F:magnesium ion binding"/>
    <property type="evidence" value="ECO:0007669"/>
    <property type="project" value="UniProtKB-UniRule"/>
</dbReference>
<dbReference type="GO" id="GO:0000166">
    <property type="term" value="F:nucleotide binding"/>
    <property type="evidence" value="ECO:0007669"/>
    <property type="project" value="UniProtKB-UniRule"/>
</dbReference>
<dbReference type="GO" id="GO:0003723">
    <property type="term" value="F:RNA binding"/>
    <property type="evidence" value="ECO:0007669"/>
    <property type="project" value="UniProtKB-UniRule"/>
</dbReference>
<dbReference type="GO" id="GO:0019079">
    <property type="term" value="P:viral genome replication"/>
    <property type="evidence" value="ECO:0007669"/>
    <property type="project" value="UniProtKB-UniRule"/>
</dbReference>
<dbReference type="HAMAP" id="MF_04092">
    <property type="entry name" value="ROTA_NSP5"/>
    <property type="match status" value="1"/>
</dbReference>
<dbReference type="InterPro" id="IPR002512">
    <property type="entry name" value="Rotavirus_A/C_NSP5"/>
</dbReference>
<dbReference type="Pfam" id="PF01525">
    <property type="entry name" value="Rota_NS26"/>
    <property type="match status" value="2"/>
</dbReference>
<dbReference type="PIRSF" id="PIRSF004006">
    <property type="entry name" value="Rota_NS26"/>
    <property type="match status" value="1"/>
</dbReference>
<reference key="1">
    <citation type="journal article" date="2008" name="J. Virol.">
        <title>Full genome-based classification of rotaviruses reveals a common origin between human Wa-Like and porcine rotavirus strains and human DS-1-like and bovine rotavirus strains.</title>
        <authorList>
            <person name="Matthijnssens J."/>
            <person name="Ciarlet M."/>
            <person name="Heiman E.M."/>
            <person name="Arijs I."/>
            <person name="Delbeke T."/>
            <person name="McDonald S.M."/>
            <person name="Palombo E.A."/>
            <person name="Iturriza-Gomara M."/>
            <person name="Maes P."/>
            <person name="Patton J.T."/>
            <person name="Rahman M."/>
            <person name="Van Ranst M."/>
        </authorList>
    </citation>
    <scope>NUCLEOTIDE SEQUENCE [GENOMIC RNA]</scope>
</reference>
<name>NSP5_ROTW3</name>
<accession>B2BRG5</accession>
<comment type="function">
    <text evidence="1">Plays an essential role in the viral genome replication. Participates, together with NSP2, in the formation of viral factories (viroplasms), which are large inclusions in the host cytoplasm where replication intermediates are assembled and viral RNA replication takes place. Orchestrates the recruitment of viroplasmic proteins such as capsid proteins to these factories. Participates in the selective exclusion of host proteins from stress granules (SG) and P bodies (PB). Also participates in the sequestration of these remodeled organelles in viral factories.</text>
</comment>
<comment type="cofactor">
    <cofactor evidence="1">
        <name>Mg(2+)</name>
        <dbReference type="ChEBI" id="CHEBI:18420"/>
    </cofactor>
</comment>
<comment type="subunit">
    <text evidence="1">Homodimer. Interacts with VP1. Interacts with VP2. Interacts with NSP2; this interaction leads to up-regulation of NSP5 hyperphosphorylation and formation of virus factories. Interacts with NSP6. Participates in the selective exclusion of host proteins from stress granules (SG) and P bodies (PB). Also participates in the sequestration of these remodeled organelles in viral factories.</text>
</comment>
<comment type="subcellular location">
    <subcellularLocation>
        <location evidence="1">Host cytoplasm</location>
    </subcellularLocation>
    <text evidence="1">Found in spherical cytoplasmic structures, called virus factories, that appear early after infection and are the site of viral replication and packaging.</text>
</comment>
<comment type="PTM">
    <text evidence="1">O-glycosylated.</text>
</comment>
<comment type="PTM">
    <text evidence="1">Hyperphosphorylated on serine residues, when in dimeric form. Phosphorylation by host CK1 is required for the hyperphosphorylation of NSP5 dimer.</text>
</comment>
<comment type="similarity">
    <text evidence="1">Belongs to the rotavirus NSP5 family.</text>
</comment>
<proteinExistence type="inferred from homology"/>
<sequence length="198" mass="21697">MSLSIDVTSLPSISSSIYKNESSSTTSTLSGKSIGRSEQYISPDAEAFSKYMLSKSPEDIGPSDSASNDPLTSFSIRSNAVKTNADAGVSMDSSTQSRPSSNVGCDQVDFSFNKGIKMNANLDSSISISTISKKEKSKSDHKSRKHYPKIEAESDSDDYVLDDSDSDDGKCKNCKYKRKYFALRMRMKQVAMQLIEDL</sequence>
<organism>
    <name type="scientific">Rotavirus A (strain RVA/Cow/United States/WC3/1981/G6P7[5])</name>
    <name type="common">RV-A</name>
    <name type="synonym">Rotavirus (strain Wistar calf 3)</name>
    <dbReference type="NCBI Taxonomy" id="578828"/>
    <lineage>
        <taxon>Viruses</taxon>
        <taxon>Riboviria</taxon>
        <taxon>Orthornavirae</taxon>
        <taxon>Duplornaviricota</taxon>
        <taxon>Resentoviricetes</taxon>
        <taxon>Reovirales</taxon>
        <taxon>Sedoreoviridae</taxon>
        <taxon>Rotavirus</taxon>
        <taxon>Rotavirus A</taxon>
    </lineage>
</organism>
<evidence type="ECO:0000255" key="1">
    <source>
        <dbReference type="HAMAP-Rule" id="MF_04092"/>
    </source>
</evidence>
<evidence type="ECO:0000256" key="2">
    <source>
        <dbReference type="SAM" id="MobiDB-lite"/>
    </source>
</evidence>
<feature type="chain" id="PRO_0000369498" description="Non-structural protein 5">
    <location>
        <begin position="1"/>
        <end position="198"/>
    </location>
</feature>
<feature type="region of interest" description="Disordered" evidence="2">
    <location>
        <begin position="16"/>
        <end position="37"/>
    </location>
</feature>
<feature type="region of interest" description="Disordered" evidence="2">
    <location>
        <begin position="53"/>
        <end position="72"/>
    </location>
</feature>
<feature type="region of interest" description="Disordered" evidence="2">
    <location>
        <begin position="85"/>
        <end position="104"/>
    </location>
</feature>
<feature type="region of interest" description="Disordered" evidence="2">
    <location>
        <begin position="130"/>
        <end position="167"/>
    </location>
</feature>
<feature type="compositionally biased region" description="Low complexity" evidence="2">
    <location>
        <begin position="16"/>
        <end position="30"/>
    </location>
</feature>
<feature type="compositionally biased region" description="Polar residues" evidence="2">
    <location>
        <begin position="91"/>
        <end position="104"/>
    </location>
</feature>
<feature type="compositionally biased region" description="Acidic residues" evidence="2">
    <location>
        <begin position="153"/>
        <end position="166"/>
    </location>
</feature>
<feature type="binding site" evidence="1">
    <location>
        <position position="92"/>
    </location>
    <ligand>
        <name>Mg(2+)</name>
        <dbReference type="ChEBI" id="CHEBI:18420"/>
    </ligand>
</feature>
<feature type="modified residue" description="Phosphoserine; by host CK1" evidence="1">
    <location>
        <position position="67"/>
    </location>
</feature>
<feature type="modified residue" description="Phosphoserine; by host" evidence="1">
    <location>
        <position position="154"/>
    </location>
</feature>
<feature type="modified residue" description="Phosphoserine; by host" evidence="1">
    <location>
        <position position="156"/>
    </location>
</feature>
<feature type="modified residue" description="Phosphoserine; by host" evidence="1">
    <location>
        <position position="164"/>
    </location>
</feature>
<feature type="modified residue" description="Phosphoserine; by host" evidence="1">
    <location>
        <position position="166"/>
    </location>
</feature>